<feature type="chain" id="PRO_0000351946" description="Protein-L-isoaspartate O-methyltransferase">
    <location>
        <begin position="1"/>
        <end position="218"/>
    </location>
</feature>
<feature type="active site" evidence="1">
    <location>
        <position position="63"/>
    </location>
</feature>
<gene>
    <name evidence="1" type="primary">pcm</name>
    <name type="ordered locus">SYNAS_19690</name>
    <name type="ORF">SYN_01000</name>
</gene>
<proteinExistence type="inferred from homology"/>
<name>PIMT_SYNAS</name>
<reference key="1">
    <citation type="journal article" date="2007" name="Proc. Natl. Acad. Sci. U.S.A.">
        <title>The genome of Syntrophus aciditrophicus: life at the thermodynamic limit of microbial growth.</title>
        <authorList>
            <person name="McInerney M.J."/>
            <person name="Rohlin L."/>
            <person name="Mouttaki H."/>
            <person name="Kim U."/>
            <person name="Krupp R.S."/>
            <person name="Rios-Hernandez L."/>
            <person name="Sieber J."/>
            <person name="Struchtemeyer C.G."/>
            <person name="Bhattacharyya A."/>
            <person name="Campbell J.W."/>
            <person name="Gunsalus R.P."/>
        </authorList>
    </citation>
    <scope>NUCLEOTIDE SEQUENCE [LARGE SCALE GENOMIC DNA]</scope>
    <source>
        <strain>SB</strain>
    </source>
</reference>
<organism>
    <name type="scientific">Syntrophus aciditrophicus (strain SB)</name>
    <dbReference type="NCBI Taxonomy" id="56780"/>
    <lineage>
        <taxon>Bacteria</taxon>
        <taxon>Pseudomonadati</taxon>
        <taxon>Thermodesulfobacteriota</taxon>
        <taxon>Syntrophia</taxon>
        <taxon>Syntrophales</taxon>
        <taxon>Syntrophaceae</taxon>
        <taxon>Syntrophus</taxon>
    </lineage>
</organism>
<protein>
    <recommendedName>
        <fullName evidence="1">Protein-L-isoaspartate O-methyltransferase</fullName>
        <ecNumber evidence="1">2.1.1.77</ecNumber>
    </recommendedName>
    <alternativeName>
        <fullName evidence="1">L-isoaspartyl protein carboxyl methyltransferase</fullName>
    </alternativeName>
    <alternativeName>
        <fullName evidence="1">Protein L-isoaspartyl methyltransferase</fullName>
    </alternativeName>
    <alternativeName>
        <fullName evidence="1">Protein-beta-aspartate methyltransferase</fullName>
        <shortName evidence="1">PIMT</shortName>
    </alternativeName>
</protein>
<dbReference type="EC" id="2.1.1.77" evidence="1"/>
<dbReference type="EMBL" id="CP000252">
    <property type="protein sequence ID" value="ABC77848.1"/>
    <property type="molecule type" value="Genomic_DNA"/>
</dbReference>
<dbReference type="RefSeq" id="WP_011417869.1">
    <property type="nucleotide sequence ID" value="NC_007759.1"/>
</dbReference>
<dbReference type="SMR" id="Q2LUT4"/>
<dbReference type="FunCoup" id="Q2LUT4">
    <property type="interactions" value="365"/>
</dbReference>
<dbReference type="STRING" id="56780.SYN_01000"/>
<dbReference type="KEGG" id="sat:SYN_01000"/>
<dbReference type="eggNOG" id="COG2518">
    <property type="taxonomic scope" value="Bacteria"/>
</dbReference>
<dbReference type="HOGENOM" id="CLU_055432_2_0_7"/>
<dbReference type="InParanoid" id="Q2LUT4"/>
<dbReference type="OrthoDB" id="9810066at2"/>
<dbReference type="Proteomes" id="UP000001933">
    <property type="component" value="Chromosome"/>
</dbReference>
<dbReference type="GO" id="GO:0005737">
    <property type="term" value="C:cytoplasm"/>
    <property type="evidence" value="ECO:0007669"/>
    <property type="project" value="UniProtKB-SubCell"/>
</dbReference>
<dbReference type="GO" id="GO:0004719">
    <property type="term" value="F:protein-L-isoaspartate (D-aspartate) O-methyltransferase activity"/>
    <property type="evidence" value="ECO:0007669"/>
    <property type="project" value="UniProtKB-UniRule"/>
</dbReference>
<dbReference type="GO" id="GO:0032259">
    <property type="term" value="P:methylation"/>
    <property type="evidence" value="ECO:0007669"/>
    <property type="project" value="UniProtKB-KW"/>
</dbReference>
<dbReference type="GO" id="GO:0036211">
    <property type="term" value="P:protein modification process"/>
    <property type="evidence" value="ECO:0007669"/>
    <property type="project" value="UniProtKB-UniRule"/>
</dbReference>
<dbReference type="GO" id="GO:0030091">
    <property type="term" value="P:protein repair"/>
    <property type="evidence" value="ECO:0007669"/>
    <property type="project" value="UniProtKB-UniRule"/>
</dbReference>
<dbReference type="CDD" id="cd02440">
    <property type="entry name" value="AdoMet_MTases"/>
    <property type="match status" value="1"/>
</dbReference>
<dbReference type="FunFam" id="3.40.50.150:FF:000010">
    <property type="entry name" value="Protein-L-isoaspartate O-methyltransferase"/>
    <property type="match status" value="1"/>
</dbReference>
<dbReference type="Gene3D" id="3.40.50.150">
    <property type="entry name" value="Vaccinia Virus protein VP39"/>
    <property type="match status" value="1"/>
</dbReference>
<dbReference type="HAMAP" id="MF_00090">
    <property type="entry name" value="PIMT"/>
    <property type="match status" value="1"/>
</dbReference>
<dbReference type="InterPro" id="IPR000682">
    <property type="entry name" value="PCMT"/>
</dbReference>
<dbReference type="InterPro" id="IPR029063">
    <property type="entry name" value="SAM-dependent_MTases_sf"/>
</dbReference>
<dbReference type="NCBIfam" id="TIGR00080">
    <property type="entry name" value="pimt"/>
    <property type="match status" value="1"/>
</dbReference>
<dbReference type="NCBIfam" id="NF001453">
    <property type="entry name" value="PRK00312.1"/>
    <property type="match status" value="1"/>
</dbReference>
<dbReference type="PANTHER" id="PTHR11579">
    <property type="entry name" value="PROTEIN-L-ISOASPARTATE O-METHYLTRANSFERASE"/>
    <property type="match status" value="1"/>
</dbReference>
<dbReference type="PANTHER" id="PTHR11579:SF0">
    <property type="entry name" value="PROTEIN-L-ISOASPARTATE(D-ASPARTATE) O-METHYLTRANSFERASE"/>
    <property type="match status" value="1"/>
</dbReference>
<dbReference type="Pfam" id="PF01135">
    <property type="entry name" value="PCMT"/>
    <property type="match status" value="1"/>
</dbReference>
<dbReference type="SUPFAM" id="SSF53335">
    <property type="entry name" value="S-adenosyl-L-methionine-dependent methyltransferases"/>
    <property type="match status" value="1"/>
</dbReference>
<dbReference type="PROSITE" id="PS01279">
    <property type="entry name" value="PCMT"/>
    <property type="match status" value="1"/>
</dbReference>
<accession>Q2LUT4</accession>
<comment type="function">
    <text evidence="1">Catalyzes the methyl esterification of L-isoaspartyl residues in peptides and proteins that result from spontaneous decomposition of normal L-aspartyl and L-asparaginyl residues. It plays a role in the repair and/or degradation of damaged proteins.</text>
</comment>
<comment type="catalytic activity">
    <reaction evidence="1">
        <text>[protein]-L-isoaspartate + S-adenosyl-L-methionine = [protein]-L-isoaspartate alpha-methyl ester + S-adenosyl-L-homocysteine</text>
        <dbReference type="Rhea" id="RHEA:12705"/>
        <dbReference type="Rhea" id="RHEA-COMP:12143"/>
        <dbReference type="Rhea" id="RHEA-COMP:12144"/>
        <dbReference type="ChEBI" id="CHEBI:57856"/>
        <dbReference type="ChEBI" id="CHEBI:59789"/>
        <dbReference type="ChEBI" id="CHEBI:90596"/>
        <dbReference type="ChEBI" id="CHEBI:90598"/>
        <dbReference type="EC" id="2.1.1.77"/>
    </reaction>
</comment>
<comment type="subcellular location">
    <subcellularLocation>
        <location evidence="1">Cytoplasm</location>
    </subcellularLocation>
</comment>
<comment type="similarity">
    <text evidence="1">Belongs to the methyltransferase superfamily. L-isoaspartyl/D-aspartyl protein methyltransferase family.</text>
</comment>
<keyword id="KW-0963">Cytoplasm</keyword>
<keyword id="KW-0489">Methyltransferase</keyword>
<keyword id="KW-1185">Reference proteome</keyword>
<keyword id="KW-0949">S-adenosyl-L-methionine</keyword>
<keyword id="KW-0808">Transferase</keyword>
<evidence type="ECO:0000255" key="1">
    <source>
        <dbReference type="HAMAP-Rule" id="MF_00090"/>
    </source>
</evidence>
<sequence length="218" mass="24308">MMDRFQKQRLRMVDTQIRARGVLNPRILEAMSRIPRHLFVEEALADQAYNDNPLPIGDMQTISQPYIVALMTDALDLKGREKVLEIGTGSGYQTALLAELADQVFSIERIASLANNARRILDQLGYYNVAIRIGDGTYGWKEESPFDAILVTAGAPDIPMPLIEQLKIGGRLVLPVGGRHIQDLVKVTRLSEDINELKKENLGGCRFVDLIGEYGWSG</sequence>